<dbReference type="EMBL" id="AM286690">
    <property type="protein sequence ID" value="CAL15853.1"/>
    <property type="molecule type" value="Genomic_DNA"/>
</dbReference>
<dbReference type="RefSeq" id="WP_011587694.1">
    <property type="nucleotide sequence ID" value="NC_008260.1"/>
</dbReference>
<dbReference type="SMR" id="Q0VSJ5"/>
<dbReference type="STRING" id="393595.ABO_0405"/>
<dbReference type="KEGG" id="abo:ABO_0405"/>
<dbReference type="eggNOG" id="COG0255">
    <property type="taxonomic scope" value="Bacteria"/>
</dbReference>
<dbReference type="HOGENOM" id="CLU_158491_1_2_6"/>
<dbReference type="OrthoDB" id="9815192at2"/>
<dbReference type="Proteomes" id="UP000008871">
    <property type="component" value="Chromosome"/>
</dbReference>
<dbReference type="GO" id="GO:0022625">
    <property type="term" value="C:cytosolic large ribosomal subunit"/>
    <property type="evidence" value="ECO:0007669"/>
    <property type="project" value="TreeGrafter"/>
</dbReference>
<dbReference type="GO" id="GO:0003735">
    <property type="term" value="F:structural constituent of ribosome"/>
    <property type="evidence" value="ECO:0007669"/>
    <property type="project" value="InterPro"/>
</dbReference>
<dbReference type="GO" id="GO:0006412">
    <property type="term" value="P:translation"/>
    <property type="evidence" value="ECO:0007669"/>
    <property type="project" value="UniProtKB-UniRule"/>
</dbReference>
<dbReference type="CDD" id="cd00427">
    <property type="entry name" value="Ribosomal_L29_HIP"/>
    <property type="match status" value="1"/>
</dbReference>
<dbReference type="FunFam" id="1.10.287.310:FF:000001">
    <property type="entry name" value="50S ribosomal protein L29"/>
    <property type="match status" value="1"/>
</dbReference>
<dbReference type="Gene3D" id="1.10.287.310">
    <property type="match status" value="1"/>
</dbReference>
<dbReference type="HAMAP" id="MF_00374">
    <property type="entry name" value="Ribosomal_uL29"/>
    <property type="match status" value="1"/>
</dbReference>
<dbReference type="InterPro" id="IPR050063">
    <property type="entry name" value="Ribosomal_protein_uL29"/>
</dbReference>
<dbReference type="InterPro" id="IPR001854">
    <property type="entry name" value="Ribosomal_uL29"/>
</dbReference>
<dbReference type="InterPro" id="IPR018254">
    <property type="entry name" value="Ribosomal_uL29_CS"/>
</dbReference>
<dbReference type="InterPro" id="IPR036049">
    <property type="entry name" value="Ribosomal_uL29_sf"/>
</dbReference>
<dbReference type="NCBIfam" id="TIGR00012">
    <property type="entry name" value="L29"/>
    <property type="match status" value="1"/>
</dbReference>
<dbReference type="PANTHER" id="PTHR10916">
    <property type="entry name" value="60S RIBOSOMAL PROTEIN L35/50S RIBOSOMAL PROTEIN L29"/>
    <property type="match status" value="1"/>
</dbReference>
<dbReference type="PANTHER" id="PTHR10916:SF0">
    <property type="entry name" value="LARGE RIBOSOMAL SUBUNIT PROTEIN UL29C"/>
    <property type="match status" value="1"/>
</dbReference>
<dbReference type="Pfam" id="PF00831">
    <property type="entry name" value="Ribosomal_L29"/>
    <property type="match status" value="1"/>
</dbReference>
<dbReference type="SUPFAM" id="SSF46561">
    <property type="entry name" value="Ribosomal protein L29 (L29p)"/>
    <property type="match status" value="1"/>
</dbReference>
<dbReference type="PROSITE" id="PS00579">
    <property type="entry name" value="RIBOSOMAL_L29"/>
    <property type="match status" value="1"/>
</dbReference>
<evidence type="ECO:0000255" key="1">
    <source>
        <dbReference type="HAMAP-Rule" id="MF_00374"/>
    </source>
</evidence>
<evidence type="ECO:0000305" key="2"/>
<name>RL29_ALCBS</name>
<keyword id="KW-1185">Reference proteome</keyword>
<keyword id="KW-0687">Ribonucleoprotein</keyword>
<keyword id="KW-0689">Ribosomal protein</keyword>
<proteinExistence type="inferred from homology"/>
<gene>
    <name evidence="1" type="primary">rpmC</name>
    <name type="ordered locus">ABO_0405</name>
</gene>
<sequence length="63" mass="7296">MKASELKEKSVEELQQTQIELLEEQFKLRMKSASGQISKTHELGTVRRNIARVKTILREKQGN</sequence>
<comment type="similarity">
    <text evidence="1">Belongs to the universal ribosomal protein uL29 family.</text>
</comment>
<protein>
    <recommendedName>
        <fullName evidence="1">Large ribosomal subunit protein uL29</fullName>
    </recommendedName>
    <alternativeName>
        <fullName evidence="2">50S ribosomal protein L29</fullName>
    </alternativeName>
</protein>
<accession>Q0VSJ5</accession>
<reference key="1">
    <citation type="journal article" date="2006" name="Nat. Biotechnol.">
        <title>Genome sequence of the ubiquitous hydrocarbon-degrading marine bacterium Alcanivorax borkumensis.</title>
        <authorList>
            <person name="Schneiker S."/>
            <person name="Martins dos Santos V.A.P."/>
            <person name="Bartels D."/>
            <person name="Bekel T."/>
            <person name="Brecht M."/>
            <person name="Buhrmester J."/>
            <person name="Chernikova T.N."/>
            <person name="Denaro R."/>
            <person name="Ferrer M."/>
            <person name="Gertler C."/>
            <person name="Goesmann A."/>
            <person name="Golyshina O.V."/>
            <person name="Kaminski F."/>
            <person name="Khachane A.N."/>
            <person name="Lang S."/>
            <person name="Linke B."/>
            <person name="McHardy A.C."/>
            <person name="Meyer F."/>
            <person name="Nechitaylo T."/>
            <person name="Puehler A."/>
            <person name="Regenhardt D."/>
            <person name="Rupp O."/>
            <person name="Sabirova J.S."/>
            <person name="Selbitschka W."/>
            <person name="Yakimov M.M."/>
            <person name="Timmis K.N."/>
            <person name="Vorhoelter F.-J."/>
            <person name="Weidner S."/>
            <person name="Kaiser O."/>
            <person name="Golyshin P.N."/>
        </authorList>
    </citation>
    <scope>NUCLEOTIDE SEQUENCE [LARGE SCALE GENOMIC DNA]</scope>
    <source>
        <strain>ATCC 700651 / DSM 11573 / NCIMB 13689 / SK2</strain>
    </source>
</reference>
<feature type="chain" id="PRO_1000007413" description="Large ribosomal subunit protein uL29">
    <location>
        <begin position="1"/>
        <end position="63"/>
    </location>
</feature>
<organism>
    <name type="scientific">Alcanivorax borkumensis (strain ATCC 700651 / DSM 11573 / NCIMB 13689 / SK2)</name>
    <dbReference type="NCBI Taxonomy" id="393595"/>
    <lineage>
        <taxon>Bacteria</taxon>
        <taxon>Pseudomonadati</taxon>
        <taxon>Pseudomonadota</taxon>
        <taxon>Gammaproteobacteria</taxon>
        <taxon>Oceanospirillales</taxon>
        <taxon>Alcanivoracaceae</taxon>
        <taxon>Alcanivorax</taxon>
    </lineage>
</organism>